<comment type="function">
    <text evidence="1">Functions in the biosynthesis of branched-chain amino acids. Catalyzes the dehydration of (2R,3R)-2,3-dihydroxy-3-methylpentanoate (2,3-dihydroxy-3-methylvalerate) into 2-oxo-3-methylpentanoate (2-oxo-3-methylvalerate) and of (2R)-2,3-dihydroxy-3-methylbutanoate (2,3-dihydroxyisovalerate) into 2-oxo-3-methylbutanoate (2-oxoisovalerate), the penultimate precursor to L-isoleucine and L-valine, respectively.</text>
</comment>
<comment type="catalytic activity">
    <reaction evidence="1">
        <text>(2R)-2,3-dihydroxy-3-methylbutanoate = 3-methyl-2-oxobutanoate + H2O</text>
        <dbReference type="Rhea" id="RHEA:24809"/>
        <dbReference type="ChEBI" id="CHEBI:11851"/>
        <dbReference type="ChEBI" id="CHEBI:15377"/>
        <dbReference type="ChEBI" id="CHEBI:49072"/>
        <dbReference type="EC" id="4.2.1.9"/>
    </reaction>
    <physiologicalReaction direction="left-to-right" evidence="1">
        <dbReference type="Rhea" id="RHEA:24810"/>
    </physiologicalReaction>
</comment>
<comment type="catalytic activity">
    <reaction evidence="1">
        <text>(2R,3R)-2,3-dihydroxy-3-methylpentanoate = (S)-3-methyl-2-oxopentanoate + H2O</text>
        <dbReference type="Rhea" id="RHEA:27694"/>
        <dbReference type="ChEBI" id="CHEBI:15377"/>
        <dbReference type="ChEBI" id="CHEBI:35146"/>
        <dbReference type="ChEBI" id="CHEBI:49258"/>
        <dbReference type="EC" id="4.2.1.9"/>
    </reaction>
    <physiologicalReaction direction="left-to-right" evidence="1">
        <dbReference type="Rhea" id="RHEA:27695"/>
    </physiologicalReaction>
</comment>
<comment type="cofactor">
    <cofactor evidence="1">
        <name>[2Fe-2S] cluster</name>
        <dbReference type="ChEBI" id="CHEBI:190135"/>
    </cofactor>
    <text evidence="1">Binds 1 [2Fe-2S] cluster per subunit. This cluster acts as a Lewis acid cofactor.</text>
</comment>
<comment type="cofactor">
    <cofactor evidence="1">
        <name>Mg(2+)</name>
        <dbReference type="ChEBI" id="CHEBI:18420"/>
    </cofactor>
</comment>
<comment type="pathway">
    <text evidence="1">Amino-acid biosynthesis; L-isoleucine biosynthesis; L-isoleucine from 2-oxobutanoate: step 3/4.</text>
</comment>
<comment type="pathway">
    <text evidence="1">Amino-acid biosynthesis; L-valine biosynthesis; L-valine from pyruvate: step 3/4.</text>
</comment>
<comment type="subunit">
    <text evidence="1">Homodimer.</text>
</comment>
<comment type="similarity">
    <text evidence="1">Belongs to the IlvD/Edd family.</text>
</comment>
<evidence type="ECO:0000255" key="1">
    <source>
        <dbReference type="HAMAP-Rule" id="MF_00012"/>
    </source>
</evidence>
<accession>A5F497</accession>
<accession>C3M300</accession>
<name>ILVD_VIBC3</name>
<gene>
    <name evidence="1" type="primary">ilvD</name>
    <name type="ordered locus">VC0395_A2491</name>
    <name type="ordered locus">VC395_0152</name>
</gene>
<reference key="1">
    <citation type="submission" date="2007-03" db="EMBL/GenBank/DDBJ databases">
        <authorList>
            <person name="Heidelberg J."/>
        </authorList>
    </citation>
    <scope>NUCLEOTIDE SEQUENCE [LARGE SCALE GENOMIC DNA]</scope>
    <source>
        <strain>ATCC 39541 / Classical Ogawa 395 / O395</strain>
    </source>
</reference>
<reference key="2">
    <citation type="journal article" date="2008" name="PLoS ONE">
        <title>A recalibrated molecular clock and independent origins for the cholera pandemic clones.</title>
        <authorList>
            <person name="Feng L."/>
            <person name="Reeves P.R."/>
            <person name="Lan R."/>
            <person name="Ren Y."/>
            <person name="Gao C."/>
            <person name="Zhou Z."/>
            <person name="Ren Y."/>
            <person name="Cheng J."/>
            <person name="Wang W."/>
            <person name="Wang J."/>
            <person name="Qian W."/>
            <person name="Li D."/>
            <person name="Wang L."/>
        </authorList>
    </citation>
    <scope>NUCLEOTIDE SEQUENCE [LARGE SCALE GENOMIC DNA]</scope>
    <source>
        <strain>ATCC 39541 / Classical Ogawa 395 / O395</strain>
    </source>
</reference>
<protein>
    <recommendedName>
        <fullName evidence="1">Dihydroxy-acid dehydratase</fullName>
        <shortName evidence="1">DAD</shortName>
        <ecNumber evidence="1">4.2.1.9</ecNumber>
    </recommendedName>
</protein>
<organism>
    <name type="scientific">Vibrio cholerae serotype O1 (strain ATCC 39541 / Classical Ogawa 395 / O395)</name>
    <dbReference type="NCBI Taxonomy" id="345073"/>
    <lineage>
        <taxon>Bacteria</taxon>
        <taxon>Pseudomonadati</taxon>
        <taxon>Pseudomonadota</taxon>
        <taxon>Gammaproteobacteria</taxon>
        <taxon>Vibrionales</taxon>
        <taxon>Vibrionaceae</taxon>
        <taxon>Vibrio</taxon>
    </lineage>
</organism>
<keyword id="KW-0001">2Fe-2S</keyword>
<keyword id="KW-0028">Amino-acid biosynthesis</keyword>
<keyword id="KW-0100">Branched-chain amino acid biosynthesis</keyword>
<keyword id="KW-0408">Iron</keyword>
<keyword id="KW-0411">Iron-sulfur</keyword>
<keyword id="KW-0456">Lyase</keyword>
<keyword id="KW-0460">Magnesium</keyword>
<keyword id="KW-0479">Metal-binding</keyword>
<feature type="chain" id="PRO_1000070953" description="Dihydroxy-acid dehydratase">
    <location>
        <begin position="1"/>
        <end position="613"/>
    </location>
</feature>
<feature type="active site" description="Proton acceptor" evidence="1">
    <location>
        <position position="517"/>
    </location>
</feature>
<feature type="binding site" evidence="1">
    <location>
        <position position="81"/>
    </location>
    <ligand>
        <name>Mg(2+)</name>
        <dbReference type="ChEBI" id="CHEBI:18420"/>
    </ligand>
</feature>
<feature type="binding site" evidence="1">
    <location>
        <position position="122"/>
    </location>
    <ligand>
        <name>[2Fe-2S] cluster</name>
        <dbReference type="ChEBI" id="CHEBI:190135"/>
    </ligand>
</feature>
<feature type="binding site" evidence="1">
    <location>
        <position position="123"/>
    </location>
    <ligand>
        <name>Mg(2+)</name>
        <dbReference type="ChEBI" id="CHEBI:18420"/>
    </ligand>
</feature>
<feature type="binding site" description="via carbamate group" evidence="1">
    <location>
        <position position="124"/>
    </location>
    <ligand>
        <name>Mg(2+)</name>
        <dbReference type="ChEBI" id="CHEBI:18420"/>
    </ligand>
</feature>
<feature type="binding site" evidence="1">
    <location>
        <position position="195"/>
    </location>
    <ligand>
        <name>[2Fe-2S] cluster</name>
        <dbReference type="ChEBI" id="CHEBI:190135"/>
    </ligand>
</feature>
<feature type="binding site" evidence="1">
    <location>
        <position position="491"/>
    </location>
    <ligand>
        <name>Mg(2+)</name>
        <dbReference type="ChEBI" id="CHEBI:18420"/>
    </ligand>
</feature>
<feature type="modified residue" description="N6-carboxylysine" evidence="1">
    <location>
        <position position="124"/>
    </location>
</feature>
<dbReference type="EC" id="4.2.1.9" evidence="1"/>
<dbReference type="EMBL" id="CP000627">
    <property type="protein sequence ID" value="ABQ21921.1"/>
    <property type="molecule type" value="Genomic_DNA"/>
</dbReference>
<dbReference type="EMBL" id="CP001235">
    <property type="protein sequence ID" value="ACP08179.1"/>
    <property type="molecule type" value="Genomic_DNA"/>
</dbReference>
<dbReference type="RefSeq" id="WP_001127457.1">
    <property type="nucleotide sequence ID" value="NZ_JAACZH010000018.1"/>
</dbReference>
<dbReference type="SMR" id="A5F497"/>
<dbReference type="GeneID" id="69721184"/>
<dbReference type="KEGG" id="vco:VC0395_A2491"/>
<dbReference type="KEGG" id="vcr:VC395_0152"/>
<dbReference type="PATRIC" id="fig|345073.21.peg.143"/>
<dbReference type="eggNOG" id="COG0129">
    <property type="taxonomic scope" value="Bacteria"/>
</dbReference>
<dbReference type="HOGENOM" id="CLU_014271_4_2_6"/>
<dbReference type="OrthoDB" id="9807077at2"/>
<dbReference type="UniPathway" id="UPA00047">
    <property type="reaction ID" value="UER00057"/>
</dbReference>
<dbReference type="UniPathway" id="UPA00049">
    <property type="reaction ID" value="UER00061"/>
</dbReference>
<dbReference type="Proteomes" id="UP000000249">
    <property type="component" value="Chromosome 2"/>
</dbReference>
<dbReference type="GO" id="GO:0005829">
    <property type="term" value="C:cytosol"/>
    <property type="evidence" value="ECO:0007669"/>
    <property type="project" value="TreeGrafter"/>
</dbReference>
<dbReference type="GO" id="GO:0051537">
    <property type="term" value="F:2 iron, 2 sulfur cluster binding"/>
    <property type="evidence" value="ECO:0007669"/>
    <property type="project" value="UniProtKB-UniRule"/>
</dbReference>
<dbReference type="GO" id="GO:0004160">
    <property type="term" value="F:dihydroxy-acid dehydratase activity"/>
    <property type="evidence" value="ECO:0007669"/>
    <property type="project" value="UniProtKB-UniRule"/>
</dbReference>
<dbReference type="GO" id="GO:0000287">
    <property type="term" value="F:magnesium ion binding"/>
    <property type="evidence" value="ECO:0007669"/>
    <property type="project" value="UniProtKB-UniRule"/>
</dbReference>
<dbReference type="GO" id="GO:0009097">
    <property type="term" value="P:isoleucine biosynthetic process"/>
    <property type="evidence" value="ECO:0007669"/>
    <property type="project" value="UniProtKB-UniRule"/>
</dbReference>
<dbReference type="GO" id="GO:0009099">
    <property type="term" value="P:L-valine biosynthetic process"/>
    <property type="evidence" value="ECO:0007669"/>
    <property type="project" value="UniProtKB-UniRule"/>
</dbReference>
<dbReference type="FunFam" id="3.50.30.80:FF:000001">
    <property type="entry name" value="Dihydroxy-acid dehydratase"/>
    <property type="match status" value="1"/>
</dbReference>
<dbReference type="Gene3D" id="3.50.30.80">
    <property type="entry name" value="IlvD/EDD C-terminal domain-like"/>
    <property type="match status" value="1"/>
</dbReference>
<dbReference type="HAMAP" id="MF_00012">
    <property type="entry name" value="IlvD"/>
    <property type="match status" value="1"/>
</dbReference>
<dbReference type="InterPro" id="IPR042096">
    <property type="entry name" value="Dihydro-acid_dehy_C"/>
</dbReference>
<dbReference type="InterPro" id="IPR004404">
    <property type="entry name" value="DihydroxyA_deHydtase"/>
</dbReference>
<dbReference type="InterPro" id="IPR020558">
    <property type="entry name" value="DiOHA_6PGluconate_deHydtase_CS"/>
</dbReference>
<dbReference type="InterPro" id="IPR056740">
    <property type="entry name" value="ILV_EDD_C"/>
</dbReference>
<dbReference type="InterPro" id="IPR000581">
    <property type="entry name" value="ILV_EDD_N"/>
</dbReference>
<dbReference type="InterPro" id="IPR037237">
    <property type="entry name" value="IlvD/EDD_N"/>
</dbReference>
<dbReference type="NCBIfam" id="TIGR00110">
    <property type="entry name" value="ilvD"/>
    <property type="match status" value="1"/>
</dbReference>
<dbReference type="NCBIfam" id="NF009103">
    <property type="entry name" value="PRK12448.1"/>
    <property type="match status" value="1"/>
</dbReference>
<dbReference type="PANTHER" id="PTHR43661">
    <property type="entry name" value="D-XYLONATE DEHYDRATASE"/>
    <property type="match status" value="1"/>
</dbReference>
<dbReference type="PANTHER" id="PTHR43661:SF3">
    <property type="entry name" value="D-XYLONATE DEHYDRATASE YAGF-RELATED"/>
    <property type="match status" value="1"/>
</dbReference>
<dbReference type="Pfam" id="PF24877">
    <property type="entry name" value="ILV_EDD_C"/>
    <property type="match status" value="1"/>
</dbReference>
<dbReference type="Pfam" id="PF00920">
    <property type="entry name" value="ILVD_EDD_N"/>
    <property type="match status" value="1"/>
</dbReference>
<dbReference type="SUPFAM" id="SSF143975">
    <property type="entry name" value="IlvD/EDD N-terminal domain-like"/>
    <property type="match status" value="1"/>
</dbReference>
<dbReference type="SUPFAM" id="SSF52016">
    <property type="entry name" value="LeuD/IlvD-like"/>
    <property type="match status" value="1"/>
</dbReference>
<dbReference type="PROSITE" id="PS00886">
    <property type="entry name" value="ILVD_EDD_1"/>
    <property type="match status" value="1"/>
</dbReference>
<dbReference type="PROSITE" id="PS00887">
    <property type="entry name" value="ILVD_EDD_2"/>
    <property type="match status" value="1"/>
</dbReference>
<sequence length="613" mass="65437">MPKYRSATTTHGRNMAGARALWRATGVKEEDFGKPIIAVVNSFTQFVPGHVHLKDLGQLVAREIEAAGGIAKEFNTIAVDDGIAMGHGGMLYSLPSRELIADSVEYMVNAHCADAMVCISNCDKITPGMLMAAMRLNIPAIFVSGGPMEAGKTKLSDQIIKLDLVDAMMQGADPKVSDAQSEQIERSACPTCGSCSGMFTANSMNCLTEALGLSQPGNGSLLATHADRKQLFLTAGQRIVELTKRYYEQDDASVLPRNIANKAAFENAIALDIAMGGSTNTVLHLLAAAQEGEVEFDMTDIDRMSRQVPHLCKVAPSTQKYHMEDVHRAGGVMGILGELQRAGLLKDQTRTVLGISLQEQLAQYDVKQTQDPAVHTMFRAGPAGIRTTQAFSQDCRWDTLDDDRQEGCIRDKAHAFSQDGGLAVLKGNLAIDGCIVKTAGVDESILKFRGPAVVYESQEDAVNGILGGQVKAGDVVVIRYEGPKGGPGMQEMLYPTTYLKSMGLGKQCALLTDGRFSGGTSGLSIGHASPEAANGGTIGLVRSGDSIAIDIPNRSITLEVSESELAARRAEQDKLGWKPVDRQRTVSLALKAYASMATSADKGAVRDKSKLEG</sequence>
<proteinExistence type="inferred from homology"/>